<name>YON8_SCHPO</name>
<keyword id="KW-0325">Glycoprotein</keyword>
<keyword id="KW-0333">Golgi apparatus</keyword>
<keyword id="KW-0472">Membrane</keyword>
<keyword id="KW-1185">Reference proteome</keyword>
<keyword id="KW-0732">Signal</keyword>
<keyword id="KW-0812">Transmembrane</keyword>
<keyword id="KW-1133">Transmembrane helix</keyword>
<keyword id="KW-0926">Vacuole</keyword>
<organism>
    <name type="scientific">Schizosaccharomyces pombe (strain 972 / ATCC 24843)</name>
    <name type="common">Fission yeast</name>
    <dbReference type="NCBI Taxonomy" id="284812"/>
    <lineage>
        <taxon>Eukaryota</taxon>
        <taxon>Fungi</taxon>
        <taxon>Dikarya</taxon>
        <taxon>Ascomycota</taxon>
        <taxon>Taphrinomycotina</taxon>
        <taxon>Schizosaccharomycetes</taxon>
        <taxon>Schizosaccharomycetales</taxon>
        <taxon>Schizosaccharomycetaceae</taxon>
        <taxon>Schizosaccharomyces</taxon>
    </lineage>
</organism>
<reference key="1">
    <citation type="journal article" date="2002" name="Nature">
        <title>The genome sequence of Schizosaccharomyces pombe.</title>
        <authorList>
            <person name="Wood V."/>
            <person name="Gwilliam R."/>
            <person name="Rajandream M.A."/>
            <person name="Lyne M.H."/>
            <person name="Lyne R."/>
            <person name="Stewart A."/>
            <person name="Sgouros J.G."/>
            <person name="Peat N."/>
            <person name="Hayles J."/>
            <person name="Baker S.G."/>
            <person name="Basham D."/>
            <person name="Bowman S."/>
            <person name="Brooks K."/>
            <person name="Brown D."/>
            <person name="Brown S."/>
            <person name="Chillingworth T."/>
            <person name="Churcher C.M."/>
            <person name="Collins M."/>
            <person name="Connor R."/>
            <person name="Cronin A."/>
            <person name="Davis P."/>
            <person name="Feltwell T."/>
            <person name="Fraser A."/>
            <person name="Gentles S."/>
            <person name="Goble A."/>
            <person name="Hamlin N."/>
            <person name="Harris D.E."/>
            <person name="Hidalgo J."/>
            <person name="Hodgson G."/>
            <person name="Holroyd S."/>
            <person name="Hornsby T."/>
            <person name="Howarth S."/>
            <person name="Huckle E.J."/>
            <person name="Hunt S."/>
            <person name="Jagels K."/>
            <person name="James K.D."/>
            <person name="Jones L."/>
            <person name="Jones M."/>
            <person name="Leather S."/>
            <person name="McDonald S."/>
            <person name="McLean J."/>
            <person name="Mooney P."/>
            <person name="Moule S."/>
            <person name="Mungall K.L."/>
            <person name="Murphy L.D."/>
            <person name="Niblett D."/>
            <person name="Odell C."/>
            <person name="Oliver K."/>
            <person name="O'Neil S."/>
            <person name="Pearson D."/>
            <person name="Quail M.A."/>
            <person name="Rabbinowitsch E."/>
            <person name="Rutherford K.M."/>
            <person name="Rutter S."/>
            <person name="Saunders D."/>
            <person name="Seeger K."/>
            <person name="Sharp S."/>
            <person name="Skelton J."/>
            <person name="Simmonds M.N."/>
            <person name="Squares R."/>
            <person name="Squares S."/>
            <person name="Stevens K."/>
            <person name="Taylor K."/>
            <person name="Taylor R.G."/>
            <person name="Tivey A."/>
            <person name="Walsh S.V."/>
            <person name="Warren T."/>
            <person name="Whitehead S."/>
            <person name="Woodward J.R."/>
            <person name="Volckaert G."/>
            <person name="Aert R."/>
            <person name="Robben J."/>
            <person name="Grymonprez B."/>
            <person name="Weltjens I."/>
            <person name="Vanstreels E."/>
            <person name="Rieger M."/>
            <person name="Schaefer M."/>
            <person name="Mueller-Auer S."/>
            <person name="Gabel C."/>
            <person name="Fuchs M."/>
            <person name="Duesterhoeft A."/>
            <person name="Fritzc C."/>
            <person name="Holzer E."/>
            <person name="Moestl D."/>
            <person name="Hilbert H."/>
            <person name="Borzym K."/>
            <person name="Langer I."/>
            <person name="Beck A."/>
            <person name="Lehrach H."/>
            <person name="Reinhardt R."/>
            <person name="Pohl T.M."/>
            <person name="Eger P."/>
            <person name="Zimmermann W."/>
            <person name="Wedler H."/>
            <person name="Wambutt R."/>
            <person name="Purnelle B."/>
            <person name="Goffeau A."/>
            <person name="Cadieu E."/>
            <person name="Dreano S."/>
            <person name="Gloux S."/>
            <person name="Lelaure V."/>
            <person name="Mottier S."/>
            <person name="Galibert F."/>
            <person name="Aves S.J."/>
            <person name="Xiang Z."/>
            <person name="Hunt C."/>
            <person name="Moore K."/>
            <person name="Hurst S.M."/>
            <person name="Lucas M."/>
            <person name="Rochet M."/>
            <person name="Gaillardin C."/>
            <person name="Tallada V.A."/>
            <person name="Garzon A."/>
            <person name="Thode G."/>
            <person name="Daga R.R."/>
            <person name="Cruzado L."/>
            <person name="Jimenez J."/>
            <person name="Sanchez M."/>
            <person name="del Rey F."/>
            <person name="Benito J."/>
            <person name="Dominguez A."/>
            <person name="Revuelta J.L."/>
            <person name="Moreno S."/>
            <person name="Armstrong J."/>
            <person name="Forsburg S.L."/>
            <person name="Cerutti L."/>
            <person name="Lowe T."/>
            <person name="McCombie W.R."/>
            <person name="Paulsen I."/>
            <person name="Potashkin J."/>
            <person name="Shpakovski G.V."/>
            <person name="Ussery D."/>
            <person name="Barrell B.G."/>
            <person name="Nurse P."/>
        </authorList>
    </citation>
    <scope>NUCLEOTIDE SEQUENCE [LARGE SCALE GENOMIC DNA]</scope>
    <source>
        <strain>972 / ATCC 24843</strain>
    </source>
</reference>
<reference key="2">
    <citation type="journal article" date="2006" name="Nat. Biotechnol.">
        <title>ORFeome cloning and global analysis of protein localization in the fission yeast Schizosaccharomyces pombe.</title>
        <authorList>
            <person name="Matsuyama A."/>
            <person name="Arai R."/>
            <person name="Yashiroda Y."/>
            <person name="Shirai A."/>
            <person name="Kamata A."/>
            <person name="Sekido S."/>
            <person name="Kobayashi Y."/>
            <person name="Hashimoto A."/>
            <person name="Hamamoto M."/>
            <person name="Hiraoka Y."/>
            <person name="Horinouchi S."/>
            <person name="Yoshida M."/>
        </authorList>
    </citation>
    <scope>SUBCELLULAR LOCATION [LARGE SCALE ANALYSIS]</scope>
</reference>
<dbReference type="EMBL" id="CU329671">
    <property type="protein sequence ID" value="CAB50971.1"/>
    <property type="molecule type" value="Genomic_DNA"/>
</dbReference>
<dbReference type="PIR" id="T39285">
    <property type="entry name" value="T39285"/>
</dbReference>
<dbReference type="BioGRID" id="276693">
    <property type="interactions" value="28"/>
</dbReference>
<dbReference type="FunCoup" id="Q9Y819">
    <property type="interactions" value="471"/>
</dbReference>
<dbReference type="STRING" id="284812.Q9Y819"/>
<dbReference type="PaxDb" id="4896-SPBC1105.08.1"/>
<dbReference type="EnsemblFungi" id="SPBC1105.08.1">
    <property type="protein sequence ID" value="SPBC1105.08.1:pep"/>
    <property type="gene ID" value="SPBC1105.08"/>
</dbReference>
<dbReference type="KEGG" id="spo:2540158"/>
<dbReference type="PomBase" id="SPBC1105.08"/>
<dbReference type="VEuPathDB" id="FungiDB:SPBC1105.08"/>
<dbReference type="eggNOG" id="KOG1278">
    <property type="taxonomic scope" value="Eukaryota"/>
</dbReference>
<dbReference type="HOGENOM" id="CLU_010714_4_1_1"/>
<dbReference type="InParanoid" id="Q9Y819"/>
<dbReference type="OMA" id="KVYYMFG"/>
<dbReference type="PhylomeDB" id="Q9Y819"/>
<dbReference type="PRO" id="PR:Q9Y819"/>
<dbReference type="Proteomes" id="UP000002485">
    <property type="component" value="Chromosome II"/>
</dbReference>
<dbReference type="GO" id="GO:0010008">
    <property type="term" value="C:endosome membrane"/>
    <property type="evidence" value="ECO:0000266"/>
    <property type="project" value="PomBase"/>
</dbReference>
<dbReference type="GO" id="GO:0000329">
    <property type="term" value="C:fungal-type vacuole membrane"/>
    <property type="evidence" value="ECO:0007005"/>
    <property type="project" value="PomBase"/>
</dbReference>
<dbReference type="GO" id="GO:0005794">
    <property type="term" value="C:Golgi apparatus"/>
    <property type="evidence" value="ECO:0007005"/>
    <property type="project" value="PomBase"/>
</dbReference>
<dbReference type="GO" id="GO:0000139">
    <property type="term" value="C:Golgi membrane"/>
    <property type="evidence" value="ECO:0007669"/>
    <property type="project" value="UniProtKB-SubCell"/>
</dbReference>
<dbReference type="GO" id="GO:0016020">
    <property type="term" value="C:membrane"/>
    <property type="evidence" value="ECO:0000318"/>
    <property type="project" value="GO_Central"/>
</dbReference>
<dbReference type="GO" id="GO:0016197">
    <property type="term" value="P:endosomal transport"/>
    <property type="evidence" value="ECO:0000266"/>
    <property type="project" value="PomBase"/>
</dbReference>
<dbReference type="GO" id="GO:0072657">
    <property type="term" value="P:protein localization to membrane"/>
    <property type="evidence" value="ECO:0000318"/>
    <property type="project" value="GO_Central"/>
</dbReference>
<dbReference type="GO" id="GO:0007034">
    <property type="term" value="P:vacuolar transport"/>
    <property type="evidence" value="ECO:0000318"/>
    <property type="project" value="GO_Central"/>
</dbReference>
<dbReference type="InterPro" id="IPR004240">
    <property type="entry name" value="EMP70"/>
</dbReference>
<dbReference type="PANTHER" id="PTHR10766:SF111">
    <property type="entry name" value="TRANSMEMBRANE 9 SUPERFAMILY MEMBER 2"/>
    <property type="match status" value="1"/>
</dbReference>
<dbReference type="PANTHER" id="PTHR10766">
    <property type="entry name" value="TRANSMEMBRANE 9 SUPERFAMILY PROTEIN"/>
    <property type="match status" value="1"/>
</dbReference>
<dbReference type="Pfam" id="PF02990">
    <property type="entry name" value="EMP70"/>
    <property type="match status" value="1"/>
</dbReference>
<proteinExistence type="inferred from homology"/>
<evidence type="ECO:0000250" key="1"/>
<evidence type="ECO:0000255" key="2"/>
<evidence type="ECO:0000269" key="3">
    <source>
    </source>
</evidence>
<evidence type="ECO:0000305" key="4"/>
<accession>Q9Y819</accession>
<protein>
    <recommendedName>
        <fullName>Transmembrane 9 superfamily protein C1105.08</fullName>
    </recommendedName>
</protein>
<comment type="subcellular location">
    <subcellularLocation>
        <location evidence="3">Golgi apparatus membrane</location>
        <topology evidence="3">Multi-pass membrane protein</topology>
    </subcellularLocation>
    <subcellularLocation>
        <location evidence="3">Vacuole membrane</location>
        <topology evidence="3">Multi-pass membrane protein</topology>
    </subcellularLocation>
</comment>
<comment type="similarity">
    <text evidence="4">Belongs to the nonaspanin (TM9SF) (TC 9.A.2) family.</text>
</comment>
<gene>
    <name type="ORF">SPBC1105.08</name>
</gene>
<feature type="signal peptide" evidence="2">
    <location>
        <begin position="1"/>
        <end position="26"/>
    </location>
</feature>
<feature type="chain" id="PRO_0000315979" description="Transmembrane 9 superfamily protein C1105.08">
    <location>
        <begin position="27"/>
        <end position="629"/>
    </location>
</feature>
<feature type="topological domain" description="Lumenal" evidence="1">
    <location>
        <begin position="27"/>
        <end position="266"/>
    </location>
</feature>
<feature type="transmembrane region" description="Helical" evidence="1">
    <location>
        <begin position="267"/>
        <end position="287"/>
    </location>
</feature>
<feature type="topological domain" description="Cytoplasmic" evidence="1">
    <location>
        <begin position="288"/>
        <end position="337"/>
    </location>
</feature>
<feature type="transmembrane region" description="Helical" evidence="1">
    <location>
        <begin position="338"/>
        <end position="358"/>
    </location>
</feature>
<feature type="topological domain" description="Lumenal" evidence="1">
    <location>
        <begin position="359"/>
        <end position="364"/>
    </location>
</feature>
<feature type="transmembrane region" description="Helical" evidence="1">
    <location>
        <begin position="365"/>
        <end position="385"/>
    </location>
</feature>
<feature type="topological domain" description="Cytoplasmic" evidence="1">
    <location>
        <begin position="386"/>
        <end position="401"/>
    </location>
</feature>
<feature type="transmembrane region" description="Helical" evidence="1">
    <location>
        <begin position="402"/>
        <end position="422"/>
    </location>
</feature>
<feature type="topological domain" description="Lumenal" evidence="1">
    <location>
        <begin position="423"/>
        <end position="436"/>
    </location>
</feature>
<feature type="transmembrane region" description="Helical" evidence="1">
    <location>
        <begin position="437"/>
        <end position="457"/>
    </location>
</feature>
<feature type="topological domain" description="Cytoplasmic" evidence="1">
    <location>
        <begin position="458"/>
        <end position="488"/>
    </location>
</feature>
<feature type="transmembrane region" description="Helical" evidence="1">
    <location>
        <begin position="489"/>
        <end position="509"/>
    </location>
</feature>
<feature type="topological domain" description="Lumenal" evidence="1">
    <location>
        <begin position="510"/>
        <end position="519"/>
    </location>
</feature>
<feature type="transmembrane region" description="Helical" evidence="1">
    <location>
        <begin position="520"/>
        <end position="544"/>
    </location>
</feature>
<feature type="topological domain" description="Cytoplasmic" evidence="1">
    <location>
        <begin position="545"/>
        <end position="558"/>
    </location>
</feature>
<feature type="transmembrane region" description="Helical" evidence="1">
    <location>
        <begin position="559"/>
        <end position="579"/>
    </location>
</feature>
<feature type="topological domain" description="Lumenal" evidence="1">
    <location>
        <begin position="580"/>
        <end position="598"/>
    </location>
</feature>
<feature type="transmembrane region" description="Helical" evidence="1">
    <location>
        <begin position="599"/>
        <end position="619"/>
    </location>
</feature>
<feature type="topological domain" description="Cytoplasmic" evidence="1">
    <location>
        <begin position="620"/>
        <end position="629"/>
    </location>
</feature>
<feature type="glycosylation site" description="N-linked (GlcNAc...) asparagine" evidence="2">
    <location>
        <position position="157"/>
    </location>
</feature>
<sequence>MLLPSIPSCSFSFVVFVSVLLQTCFSFQLTPLSPKNYPPGASIDTTVNTISPFIGDGRGSDIFNYEYYDERFHFCRPENIAKQSESLGSVLFGDRLYNSPIEIKMLENQDCVPLCASIIPSSDVSFIRDLISKNYVVNWNIDNLPVATYLEGTNSKNYSLSPGFPLGKNTEKGVILFNHYDIVIEYHTTSSDQHRVVGAYVKPVSKESTLVDGNPVCSSSSNPQYLPEGADLTLVTSYSVSWKYSDTPWATRWDKYMHIESRQIRWIFIIHSAIIDTFLIFVVSIILYRTLNRDINKYNSAFVDQEDVQEDFGWKLVHGDVFRPPRRPMLFSILLGTGAQLLFMSSGIVLFAIFGIVAPSRRGSLATATVALFIISGFVSGYVSALSYKLMQGMLRKRNLLLTPFVVPGFMLAAALFFNMVFWSKSSSSTVPFSSWLLLIFLYLLFTVPLSFVGSLIGFRSREFVPPVRTNQIPRQIPSHSIWLSSFPSAIIGGSIPFLVILIELFSILDSLWFHPLYFMFGFSFFCFGILVTTCIMVSIITVYFQLCSENYNWWWRSFITPGFCGIYVFIFSVFYWFFKISSSSLATAVLYFGYSLLISVLVFFLCGSVGFFGAFLFVNKIYASIKID</sequence>